<feature type="chain" id="PRO_0000192816" description="Cell division control protein 45 homolog">
    <location>
        <begin position="1"/>
        <end position="566"/>
    </location>
</feature>
<feature type="region of interest" description="Disordered" evidence="3">
    <location>
        <begin position="138"/>
        <end position="161"/>
    </location>
</feature>
<feature type="compositionally biased region" description="Acidic residues" evidence="3">
    <location>
        <begin position="138"/>
        <end position="152"/>
    </location>
</feature>
<feature type="modified residue" description="Phosphotyrosine" evidence="1">
    <location>
        <position position="130"/>
    </location>
</feature>
<feature type="modified residue" description="Phosphoserine" evidence="5">
    <location>
        <position position="144"/>
    </location>
</feature>
<feature type="modified residue" description="Phosphoserine" evidence="5">
    <location>
        <position position="146"/>
    </location>
</feature>
<feature type="sequence conflict" description="In Ref. 1; AAC95057." evidence="4" ref="1">
    <original>D</original>
    <variation>Y</variation>
    <location>
        <position position="142"/>
    </location>
</feature>
<feature type="sequence conflict" description="In Ref. 2; CAA11531." evidence="4" ref="2">
    <original>NRKRRQRREW</original>
    <variation>ETGRGGRPGSG</variation>
    <location>
        <begin position="168"/>
        <end position="177"/>
    </location>
</feature>
<feature type="sequence conflict" description="In Ref. 3; AAD08999/AAD09000/AAD09001." evidence="4" ref="3">
    <original>R</original>
    <variation>K</variation>
    <location>
        <position position="175"/>
    </location>
</feature>
<feature type="sequence conflict" description="In Ref. 2; CAA11531." evidence="4" ref="2">
    <original>S</original>
    <variation>T</variation>
    <location>
        <position position="197"/>
    </location>
</feature>
<feature type="sequence conflict" description="In Ref. 2; CAA11531." evidence="4" ref="2">
    <original>V</original>
    <variation>L</variation>
    <location>
        <position position="249"/>
    </location>
</feature>
<feature type="sequence conflict" description="In Ref. 2; CAA11531." evidence="4" ref="2">
    <original>KGNLRE</original>
    <variation>EGESAR</variation>
    <location>
        <begin position="337"/>
        <end position="342"/>
    </location>
</feature>
<feature type="sequence conflict" description="In Ref. 2; CAA11531." evidence="4" ref="2">
    <original>A</original>
    <variation>T</variation>
    <location>
        <position position="373"/>
    </location>
</feature>
<proteinExistence type="evidence at protein level"/>
<comment type="function">
    <text>Required for initiation of chromosomal DNA replication.</text>
</comment>
<comment type="subunit">
    <text evidence="1 2">Associated with ORC2. Interacts with HELB (By similarity). Component of the CMG helicase complex, composed of the MCM2-7 complex, the GINS complex and CDC45 (By similarity).</text>
</comment>
<comment type="subcellular location">
    <subcellularLocation>
        <location>Nucleus</location>
    </subcellularLocation>
</comment>
<comment type="tissue specificity">
    <text>Widely expressed.</text>
</comment>
<comment type="similarity">
    <text evidence="4">Belongs to the CDC45 family.</text>
</comment>
<evidence type="ECO:0000250" key="1">
    <source>
        <dbReference type="UniProtKB" id="O75419"/>
    </source>
</evidence>
<evidence type="ECO:0000250" key="2">
    <source>
        <dbReference type="UniProtKB" id="Q9YHZ6"/>
    </source>
</evidence>
<evidence type="ECO:0000256" key="3">
    <source>
        <dbReference type="SAM" id="MobiDB-lite"/>
    </source>
</evidence>
<evidence type="ECO:0000305" key="4"/>
<evidence type="ECO:0007744" key="5">
    <source>
    </source>
</evidence>
<dbReference type="EMBL" id="AF098068">
    <property type="protein sequence ID" value="AAC95057.1"/>
    <property type="molecule type" value="mRNA"/>
</dbReference>
<dbReference type="EMBL" id="AJ223729">
    <property type="protein sequence ID" value="CAA11531.1"/>
    <property type="molecule type" value="mRNA"/>
</dbReference>
<dbReference type="EMBL" id="AF081536">
    <property type="protein sequence ID" value="AAD08999.1"/>
    <property type="molecule type" value="mRNA"/>
</dbReference>
<dbReference type="EMBL" id="AF081537">
    <property type="protein sequence ID" value="AAD09000.1"/>
    <property type="molecule type" value="mRNA"/>
</dbReference>
<dbReference type="EMBL" id="AF081538">
    <property type="protein sequence ID" value="AAD09001.1"/>
    <property type="molecule type" value="mRNA"/>
</dbReference>
<dbReference type="EMBL" id="AF081539">
    <property type="protein sequence ID" value="AAD09002.1"/>
    <property type="molecule type" value="mRNA"/>
</dbReference>
<dbReference type="EMBL" id="BC028635">
    <property type="protein sequence ID" value="AAH28635.1"/>
    <property type="molecule type" value="mRNA"/>
</dbReference>
<dbReference type="CCDS" id="CCDS28027.1"/>
<dbReference type="RefSeq" id="NP_001345135.1">
    <property type="nucleotide sequence ID" value="NM_001358206.2"/>
</dbReference>
<dbReference type="RefSeq" id="NP_033992.2">
    <property type="nucleotide sequence ID" value="NM_009862.3"/>
</dbReference>
<dbReference type="RefSeq" id="XP_006521807.1">
    <property type="nucleotide sequence ID" value="XM_006521744.2"/>
</dbReference>
<dbReference type="RefSeq" id="XP_011244115.1">
    <property type="nucleotide sequence ID" value="XM_011245813.2"/>
</dbReference>
<dbReference type="RefSeq" id="XP_036015653.1">
    <property type="nucleotide sequence ID" value="XM_036159760.1"/>
</dbReference>
<dbReference type="SMR" id="Q9Z1X9"/>
<dbReference type="BioGRID" id="198628">
    <property type="interactions" value="2"/>
</dbReference>
<dbReference type="ComplexPortal" id="CPX-4541">
    <property type="entry name" value="CMG helicase complex"/>
</dbReference>
<dbReference type="FunCoup" id="Q9Z1X9">
    <property type="interactions" value="1837"/>
</dbReference>
<dbReference type="IntAct" id="Q9Z1X9">
    <property type="interactions" value="2"/>
</dbReference>
<dbReference type="STRING" id="10090.ENSMUSP00000000028"/>
<dbReference type="iPTMnet" id="Q9Z1X9"/>
<dbReference type="PhosphoSitePlus" id="Q9Z1X9"/>
<dbReference type="PaxDb" id="10090-ENSMUSP00000000028"/>
<dbReference type="ProteomicsDB" id="283765"/>
<dbReference type="Pumba" id="Q9Z1X9"/>
<dbReference type="Antibodypedia" id="262">
    <property type="antibodies" value="374 antibodies from 37 providers"/>
</dbReference>
<dbReference type="DNASU" id="12544"/>
<dbReference type="Ensembl" id="ENSMUST00000000028.14">
    <property type="protein sequence ID" value="ENSMUSP00000000028.8"/>
    <property type="gene ID" value="ENSMUSG00000000028.16"/>
</dbReference>
<dbReference type="GeneID" id="12544"/>
<dbReference type="KEGG" id="mmu:12544"/>
<dbReference type="UCSC" id="uc007yom.2">
    <property type="organism name" value="mouse"/>
</dbReference>
<dbReference type="AGR" id="MGI:1338073"/>
<dbReference type="CTD" id="8318"/>
<dbReference type="MGI" id="MGI:1338073">
    <property type="gene designation" value="Cdc45"/>
</dbReference>
<dbReference type="VEuPathDB" id="HostDB:ENSMUSG00000000028"/>
<dbReference type="eggNOG" id="KOG2475">
    <property type="taxonomic scope" value="Eukaryota"/>
</dbReference>
<dbReference type="GeneTree" id="ENSGT00390000009662"/>
<dbReference type="HOGENOM" id="CLU_005871_4_0_1"/>
<dbReference type="InParanoid" id="Q9Z1X9"/>
<dbReference type="OMA" id="EDCFMEA"/>
<dbReference type="OrthoDB" id="10258882at2759"/>
<dbReference type="PhylomeDB" id="Q9Z1X9"/>
<dbReference type="TreeFam" id="TF101062"/>
<dbReference type="Reactome" id="R-MMU-176187">
    <property type="pathway name" value="Activation of ATR in response to replication stress"/>
</dbReference>
<dbReference type="Reactome" id="R-MMU-68962">
    <property type="pathway name" value="Activation of the pre-replicative complex"/>
</dbReference>
<dbReference type="BioGRID-ORCS" id="12544">
    <property type="hits" value="29 hits in 115 CRISPR screens"/>
</dbReference>
<dbReference type="ChiTaRS" id="Cdc45">
    <property type="organism name" value="mouse"/>
</dbReference>
<dbReference type="PRO" id="PR:Q9Z1X9"/>
<dbReference type="Proteomes" id="UP000000589">
    <property type="component" value="Chromosome 16"/>
</dbReference>
<dbReference type="RNAct" id="Q9Z1X9">
    <property type="molecule type" value="protein"/>
</dbReference>
<dbReference type="Bgee" id="ENSMUSG00000000028">
    <property type="expression patterns" value="Expressed in animal zygote and 175 other cell types or tissues"/>
</dbReference>
<dbReference type="ExpressionAtlas" id="Q9Z1X9">
    <property type="expression patterns" value="baseline and differential"/>
</dbReference>
<dbReference type="GO" id="GO:0005813">
    <property type="term" value="C:centrosome"/>
    <property type="evidence" value="ECO:0007669"/>
    <property type="project" value="Ensembl"/>
</dbReference>
<dbReference type="GO" id="GO:0036064">
    <property type="term" value="C:ciliary basal body"/>
    <property type="evidence" value="ECO:0007669"/>
    <property type="project" value="Ensembl"/>
</dbReference>
<dbReference type="GO" id="GO:0071162">
    <property type="term" value="C:CMG complex"/>
    <property type="evidence" value="ECO:0000266"/>
    <property type="project" value="ComplexPortal"/>
</dbReference>
<dbReference type="GO" id="GO:0005634">
    <property type="term" value="C:nucleus"/>
    <property type="evidence" value="ECO:0000303"/>
    <property type="project" value="ComplexPortal"/>
</dbReference>
<dbReference type="GO" id="GO:0006270">
    <property type="term" value="P:DNA replication initiation"/>
    <property type="evidence" value="ECO:0007669"/>
    <property type="project" value="InterPro"/>
</dbReference>
<dbReference type="InterPro" id="IPR003874">
    <property type="entry name" value="CDC45"/>
</dbReference>
<dbReference type="PANTHER" id="PTHR10507">
    <property type="entry name" value="CDC45-RELATED PROTEIN"/>
    <property type="match status" value="1"/>
</dbReference>
<dbReference type="PANTHER" id="PTHR10507:SF0">
    <property type="entry name" value="CELL DIVISION CONTROL PROTEIN 45 HOMOLOG"/>
    <property type="match status" value="1"/>
</dbReference>
<dbReference type="Pfam" id="PF02724">
    <property type="entry name" value="CDC45"/>
    <property type="match status" value="1"/>
</dbReference>
<accession>Q9Z1X9</accession>
<accession>O70547</accession>
<accession>Q9QUK1</accession>
<accession>Q9R212</accession>
<name>CDC45_MOUSE</name>
<keyword id="KW-0131">Cell cycle</keyword>
<keyword id="KW-0235">DNA replication</keyword>
<keyword id="KW-0539">Nucleus</keyword>
<keyword id="KW-0597">Phosphoprotein</keyword>
<keyword id="KW-1185">Reference proteome</keyword>
<reference key="1">
    <citation type="submission" date="1998-10" db="EMBL/GenBank/DDBJ databases">
        <authorList>
            <person name="Breyer P."/>
            <person name="Staib C."/>
            <person name="Lepke M."/>
            <person name="Springer J."/>
            <person name="Grummt F."/>
        </authorList>
    </citation>
    <scope>NUCLEOTIDE SEQUENCE [MRNA]</scope>
</reference>
<reference key="2">
    <citation type="journal article" date="1998" name="Genome Res.">
        <title>Direct selection of conserved cDNAs from the DiGeorge critical region: isolation of a novel CDC45-like gene.</title>
        <authorList>
            <person name="McKie J.M."/>
            <person name="Wadey R.B."/>
            <person name="Sutherland H.F."/>
            <person name="Taylor C.L."/>
            <person name="Scambler P.J."/>
        </authorList>
    </citation>
    <scope>NUCLEOTIDE SEQUENCE [MRNA]</scope>
</reference>
<reference key="3">
    <citation type="journal article" date="1999" name="Mamm. Genome">
        <title>Characterization of CDC45L: a gene in the 22q11.2 deletion region expressed during murine and human development.</title>
        <authorList>
            <person name="Shaikh T.H."/>
            <person name="Gottlieb S."/>
            <person name="Sellinger B."/>
            <person name="Chen F."/>
            <person name="Roe B.A."/>
            <person name="Oakey R.J."/>
            <person name="Emanuel B.S."/>
            <person name="Budarf M.L."/>
        </authorList>
    </citation>
    <scope>NUCLEOTIDE SEQUENCE [MRNA]</scope>
    <source>
        <tissue>Ectoplacental cone</tissue>
        <tissue>Testis</tissue>
    </source>
</reference>
<reference key="4">
    <citation type="journal article" date="2004" name="Genome Res.">
        <title>The status, quality, and expansion of the NIH full-length cDNA project: the Mammalian Gene Collection (MGC).</title>
        <authorList>
            <consortium name="The MGC Project Team"/>
        </authorList>
    </citation>
    <scope>NUCLEOTIDE SEQUENCE [LARGE SCALE MRNA]</scope>
    <source>
        <strain>C57BL/6J</strain>
        <tissue>Thymus</tissue>
    </source>
</reference>
<reference key="5">
    <citation type="journal article" date="2010" name="Cell">
        <title>A tissue-specific atlas of mouse protein phosphorylation and expression.</title>
        <authorList>
            <person name="Huttlin E.L."/>
            <person name="Jedrychowski M.P."/>
            <person name="Elias J.E."/>
            <person name="Goswami T."/>
            <person name="Rad R."/>
            <person name="Beausoleil S.A."/>
            <person name="Villen J."/>
            <person name="Haas W."/>
            <person name="Sowa M.E."/>
            <person name="Gygi S.P."/>
        </authorList>
    </citation>
    <scope>PHOSPHORYLATION [LARGE SCALE ANALYSIS] AT SER-144 AND SER-146</scope>
    <scope>IDENTIFICATION BY MASS SPECTROMETRY [LARGE SCALE ANALYSIS]</scope>
    <source>
        <tissue>Spleen</tissue>
    </source>
</reference>
<sequence>MFVTDFRKEFYETVHNQRVLLFVASDVDALCACKILQALFQCDHVQYTLVPVSGWQELETAYLEHKEQFSYFILINCGANVDLLDILQPDEDSIFFVCDTHRPVNVVNVYNDTQIKLLIKQEDDLEVPAYDDIFRDEAEDEDLSDSDGDGSEPSEKRTRLEEEIVERNRKRRQRREWEARRKDILFDYEQYEYYGTSSAMVMFDLAWMMSKDLNDMLWWAIVGLTDQWVHDKITQMKYVTDVGILQRHVSRHNHRNEAEENMLSVDCTRISFEYDLCLVLYQHWSLHESLYNTSYTAARFKLWSVHGQKRLQEFLADMGLPLKQVKQKFQSMDVSLKGNLREMIEESANKFGMKDMRVQTFSIQFGFKHKFLASDVVFATMSLMESPEKDGSGTDHFIQALDSLSRSNLDKLYLGLELAKKHLQATQQTIASCLCTNLVTSQGPFLYCSLMEGTPDVTLFSKPASLSLLSRHLLKSFVYSTKNRRCKLLPLVMAAPLSVEQGTVTVVGIPPETDSSDRKNFFGRAFEKAAESTSSRTLHNYFDLSVIELKAEDRSKFLDALVSLLS</sequence>
<protein>
    <recommendedName>
        <fullName>Cell division control protein 45 homolog</fullName>
    </recommendedName>
    <alternativeName>
        <fullName>PORC-PI-1</fullName>
    </alternativeName>
</protein>
<organism>
    <name type="scientific">Mus musculus</name>
    <name type="common">Mouse</name>
    <dbReference type="NCBI Taxonomy" id="10090"/>
    <lineage>
        <taxon>Eukaryota</taxon>
        <taxon>Metazoa</taxon>
        <taxon>Chordata</taxon>
        <taxon>Craniata</taxon>
        <taxon>Vertebrata</taxon>
        <taxon>Euteleostomi</taxon>
        <taxon>Mammalia</taxon>
        <taxon>Eutheria</taxon>
        <taxon>Euarchontoglires</taxon>
        <taxon>Glires</taxon>
        <taxon>Rodentia</taxon>
        <taxon>Myomorpha</taxon>
        <taxon>Muroidea</taxon>
        <taxon>Muridae</taxon>
        <taxon>Murinae</taxon>
        <taxon>Mus</taxon>
        <taxon>Mus</taxon>
    </lineage>
</organism>
<gene>
    <name type="primary">Cdc45</name>
    <name type="synonym">Cdc45l</name>
    <name type="synonym">Cdc45l2</name>
</gene>